<comment type="function">
    <text evidence="1">Catalyzes the hydrolytic dehalogenation of small (S)-2-haloalkanoic acids to yield the corresponding (R)-2-hydroxyalkanoic acids. Acts on acids of short chain lengths, C(2) to C(4), with inversion of configuration at C-2. Active with 2-halogenated carboxylic acids and converts only the S-isomer (or L-isomer) of 2-chloropropionic acid with inversion of configuration to produce R-lactate (or D-isomer).</text>
</comment>
<comment type="catalytic activity">
    <reaction evidence="1">
        <text>an (S)-2-haloacid + H2O = a (2R)-2-hydroxycarboxylate + a halide anion + H(+)</text>
        <dbReference type="Rhea" id="RHEA:11192"/>
        <dbReference type="ChEBI" id="CHEBI:15377"/>
        <dbReference type="ChEBI" id="CHEBI:15378"/>
        <dbReference type="ChEBI" id="CHEBI:16042"/>
        <dbReference type="ChEBI" id="CHEBI:58314"/>
        <dbReference type="ChEBI" id="CHEBI:137405"/>
        <dbReference type="EC" id="3.8.1.2"/>
    </reaction>
</comment>
<comment type="catalytic activity">
    <reaction evidence="1">
        <text>(S)-2-chloropropanoate + H2O = (R)-lactate + chloride + H(+)</text>
        <dbReference type="Rhea" id="RHEA:67956"/>
        <dbReference type="ChEBI" id="CHEBI:15377"/>
        <dbReference type="ChEBI" id="CHEBI:15378"/>
        <dbReference type="ChEBI" id="CHEBI:16004"/>
        <dbReference type="ChEBI" id="CHEBI:17996"/>
        <dbReference type="ChEBI" id="CHEBI:73934"/>
    </reaction>
</comment>
<comment type="biotechnology">
    <text evidence="2">(S)-2-haloacid dehalogenases may be used for the biodegradation of halogenated substances and their derivatives which are widely used as pesticides, herbicides and other industrial products.</text>
</comment>
<comment type="similarity">
    <text evidence="2">Belongs to the HAD-like hydrolase superfamily. S-2-haloalkanoic acid dehalogenase family.</text>
</comment>
<proteinExistence type="inferred from homology"/>
<organism>
    <name type="scientific">Pseudomonas fluorescens</name>
    <dbReference type="NCBI Taxonomy" id="294"/>
    <lineage>
        <taxon>Bacteria</taxon>
        <taxon>Pseudomonadati</taxon>
        <taxon>Pseudomonadota</taxon>
        <taxon>Gammaproteobacteria</taxon>
        <taxon>Pseudomonadales</taxon>
        <taxon>Pseudomonadaceae</taxon>
        <taxon>Pseudomonas</taxon>
    </lineage>
</organism>
<name>HAD_PSEFL</name>
<evidence type="ECO:0000250" key="1">
    <source>
        <dbReference type="UniProtKB" id="Q53464"/>
    </source>
</evidence>
<evidence type="ECO:0000305" key="2"/>
<protein>
    <recommendedName>
        <fullName evidence="2">(S)-2-haloacid dehalogenase</fullName>
        <ecNumber evidence="1">3.8.1.2</ecNumber>
    </recommendedName>
    <alternativeName>
        <fullName>2-haloalkanoic acid dehalogenase</fullName>
    </alternativeName>
    <alternativeName>
        <fullName>Halocarboxylic acid halidohydrolase</fullName>
    </alternativeName>
    <alternativeName>
        <fullName>L-2-haloacid dehalogenase</fullName>
    </alternativeName>
</protein>
<feature type="chain" id="PRO_0000079165" description="(S)-2-haloacid dehalogenase">
    <location>
        <begin position="1"/>
        <end position="227"/>
    </location>
</feature>
<feature type="region of interest" description="Important for catalytic activity" evidence="1">
    <location>
        <begin position="175"/>
        <end position="180"/>
    </location>
</feature>
<feature type="active site" description="Nucleophile" evidence="1">
    <location>
        <position position="10"/>
    </location>
</feature>
<feature type="binding site" evidence="1">
    <location>
        <begin position="11"/>
        <end position="12"/>
    </location>
    <ligand>
        <name>an (S)-2-haloacid</name>
        <dbReference type="ChEBI" id="CHEBI:137405"/>
    </ligand>
</feature>
<feature type="binding site" evidence="1">
    <location>
        <position position="41"/>
    </location>
    <ligand>
        <name>an (S)-2-haloacid</name>
        <dbReference type="ChEBI" id="CHEBI:137405"/>
    </ligand>
</feature>
<feature type="binding site" evidence="1">
    <location>
        <begin position="118"/>
        <end position="119"/>
    </location>
    <ligand>
        <name>an (S)-2-haloacid</name>
        <dbReference type="ChEBI" id="CHEBI:137405"/>
    </ligand>
</feature>
<feature type="site" description="Important for catalytic activity" evidence="1">
    <location>
        <position position="14"/>
    </location>
</feature>
<feature type="site" description="Important for catalytic activity" evidence="1">
    <location>
        <position position="151"/>
    </location>
</feature>
<feature type="site" description="Important for catalytic activity" evidence="1">
    <location>
        <position position="157"/>
    </location>
</feature>
<keyword id="KW-0378">Hydrolase</keyword>
<sequence length="227" mass="25637">MKNIQGAVFDLYGTLYDVNSVAQVCEEVYSGHGDSISRLWRQKQLEYTWLRSLMGRYVNFEKATEDALRFTCTHLGLSLDDETHQRLSDAYLHLTPYADTADALRRLKAAGLPVGIISNGSHCSIEQVVTNSEMNWAFDQLISVEDVQVFKPDSRVYSLAEKRMGFPKENILFVSSNAWDASAASNFGFPVCWINRQNGAFDELDAKPTHVVRNLAEMSNWLVNSLD</sequence>
<accession>Q59666</accession>
<reference key="1">
    <citation type="submission" date="1999-12" db="EMBL/GenBank/DDBJ databases">
        <authorList>
            <person name="Honnens E."/>
            <person name="Reiting R."/>
            <person name="Brokamp A."/>
            <person name="Schmidt F.J.R."/>
        </authorList>
    </citation>
    <scope>NUCLEOTIDE SEQUENCE [GENOMIC DNA]</scope>
    <source>
        <strain>ABVII</strain>
    </source>
</reference>
<gene>
    <name type="primary">dhl VII</name>
</gene>
<dbReference type="EC" id="3.8.1.2" evidence="1"/>
<dbReference type="EMBL" id="X94147">
    <property type="protein sequence ID" value="CAA63861.2"/>
    <property type="molecule type" value="Genomic_DNA"/>
</dbReference>
<dbReference type="SMR" id="Q59666"/>
<dbReference type="GO" id="GO:0018784">
    <property type="term" value="F:(S)-2-haloacid dehalogenase activity"/>
    <property type="evidence" value="ECO:0007669"/>
    <property type="project" value="UniProtKB-EC"/>
</dbReference>
<dbReference type="CDD" id="cd02588">
    <property type="entry name" value="HAD_L2-DEX"/>
    <property type="match status" value="1"/>
</dbReference>
<dbReference type="Gene3D" id="3.40.50.1000">
    <property type="entry name" value="HAD superfamily/HAD-like"/>
    <property type="match status" value="1"/>
</dbReference>
<dbReference type="Gene3D" id="1.10.150.240">
    <property type="entry name" value="Putative phosphatase, domain 2"/>
    <property type="match status" value="1"/>
</dbReference>
<dbReference type="InterPro" id="IPR006328">
    <property type="entry name" value="2-HAD"/>
</dbReference>
<dbReference type="InterPro" id="IPR036412">
    <property type="entry name" value="HAD-like_sf"/>
</dbReference>
<dbReference type="InterPro" id="IPR006439">
    <property type="entry name" value="HAD-SF_hydro_IA"/>
</dbReference>
<dbReference type="InterPro" id="IPR023214">
    <property type="entry name" value="HAD_sf"/>
</dbReference>
<dbReference type="InterPro" id="IPR023198">
    <property type="entry name" value="PGP-like_dom2"/>
</dbReference>
<dbReference type="InterPro" id="IPR051540">
    <property type="entry name" value="S-2-haloacid_dehalogenase"/>
</dbReference>
<dbReference type="NCBIfam" id="TIGR01493">
    <property type="entry name" value="HAD-SF-IA-v2"/>
    <property type="match status" value="1"/>
</dbReference>
<dbReference type="NCBIfam" id="TIGR01428">
    <property type="entry name" value="HAD_type_II"/>
    <property type="match status" value="1"/>
</dbReference>
<dbReference type="PANTHER" id="PTHR43316:SF3">
    <property type="entry name" value="HALOACID DEHALOGENASE, TYPE II (AFU_ORTHOLOGUE AFUA_2G07750)-RELATED"/>
    <property type="match status" value="1"/>
</dbReference>
<dbReference type="PANTHER" id="PTHR43316">
    <property type="entry name" value="HYDROLASE, HALOACID DELAHOGENASE-RELATED"/>
    <property type="match status" value="1"/>
</dbReference>
<dbReference type="Pfam" id="PF00702">
    <property type="entry name" value="Hydrolase"/>
    <property type="match status" value="1"/>
</dbReference>
<dbReference type="PRINTS" id="PR00413">
    <property type="entry name" value="HADHALOGNASE"/>
</dbReference>
<dbReference type="SFLD" id="SFLDF00045">
    <property type="entry name" value="2-haloacid_dehalogenase"/>
    <property type="match status" value="1"/>
</dbReference>
<dbReference type="SFLD" id="SFLDS00003">
    <property type="entry name" value="Haloacid_Dehalogenase"/>
    <property type="match status" value="1"/>
</dbReference>
<dbReference type="SUPFAM" id="SSF56784">
    <property type="entry name" value="HAD-like"/>
    <property type="match status" value="1"/>
</dbReference>